<reference key="1">
    <citation type="submission" date="2008-05" db="EMBL/GenBank/DDBJ databases">
        <title>Complete sequence of chromosome of Geobacter lovleyi SZ.</title>
        <authorList>
            <consortium name="US DOE Joint Genome Institute"/>
            <person name="Lucas S."/>
            <person name="Copeland A."/>
            <person name="Lapidus A."/>
            <person name="Glavina del Rio T."/>
            <person name="Dalin E."/>
            <person name="Tice H."/>
            <person name="Bruce D."/>
            <person name="Goodwin L."/>
            <person name="Pitluck S."/>
            <person name="Chertkov O."/>
            <person name="Meincke L."/>
            <person name="Brettin T."/>
            <person name="Detter J.C."/>
            <person name="Han C."/>
            <person name="Tapia R."/>
            <person name="Kuske C.R."/>
            <person name="Schmutz J."/>
            <person name="Larimer F."/>
            <person name="Land M."/>
            <person name="Hauser L."/>
            <person name="Kyrpides N."/>
            <person name="Mikhailova N."/>
            <person name="Sung Y."/>
            <person name="Fletcher K.E."/>
            <person name="Ritalahti K.M."/>
            <person name="Loeffler F.E."/>
            <person name="Richardson P."/>
        </authorList>
    </citation>
    <scope>NUCLEOTIDE SEQUENCE [LARGE SCALE GENOMIC DNA]</scope>
    <source>
        <strain>ATCC BAA-1151 / DSM 17278 / SZ</strain>
    </source>
</reference>
<accession>B3E7F6</accession>
<keyword id="KW-0378">Hydrolase</keyword>
<keyword id="KW-0511">Multifunctional enzyme</keyword>
<keyword id="KW-0658">Purine biosynthesis</keyword>
<keyword id="KW-1185">Reference proteome</keyword>
<keyword id="KW-0808">Transferase</keyword>
<gene>
    <name evidence="1" type="primary">purH</name>
    <name type="ordered locus">Glov_2760</name>
</gene>
<feature type="chain" id="PRO_1000192977" description="Bifunctional purine biosynthesis protein PurH">
    <location>
        <begin position="1"/>
        <end position="519"/>
    </location>
</feature>
<feature type="domain" description="MGS-like" evidence="2">
    <location>
        <begin position="1"/>
        <end position="147"/>
    </location>
</feature>
<protein>
    <recommendedName>
        <fullName evidence="1">Bifunctional purine biosynthesis protein PurH</fullName>
    </recommendedName>
    <domain>
        <recommendedName>
            <fullName evidence="1">Phosphoribosylaminoimidazolecarboxamide formyltransferase</fullName>
            <ecNumber evidence="1">2.1.2.3</ecNumber>
        </recommendedName>
        <alternativeName>
            <fullName evidence="1">AICAR transformylase</fullName>
        </alternativeName>
    </domain>
    <domain>
        <recommendedName>
            <fullName evidence="1">IMP cyclohydrolase</fullName>
            <ecNumber evidence="1">3.5.4.10</ecNumber>
        </recommendedName>
        <alternativeName>
            <fullName evidence="1">ATIC</fullName>
        </alternativeName>
        <alternativeName>
            <fullName evidence="1">IMP synthase</fullName>
        </alternativeName>
        <alternativeName>
            <fullName evidence="1">Inosinicase</fullName>
        </alternativeName>
    </domain>
</protein>
<sequence length="519" mass="55548">MAKITRALISVSDKTGIVELSKALAGYGVEILSTGGTAKLLRESGLTVKDVSEFTGFPEMLDGRVKTLHPKVHGGLLGIRANAEHQAKMKEHGIEPIDMVVVNLYPFEATVAKPDCTLEDAIENIDIGGPTMLRSAAKNNHDVTVLVDAADYAAVLEEMAANGGAVSAKTNFRLAVKVYQHTAAYDGAISNWLGARLGENTDEYPETFTIQVKKAQDLRYGENPHQSAAFYVERGITEPCVSNAVQLQGKELSFNNIIDLDAAIETVKEFTDKPAAVIIKHTNPCGVALGDSPISAYLKARECDPVSAFGGIVGFNRIVDAAAARELTSTFLEAVIAPGYDEEALAIFTAKKNVRVMQVPLLAGHLQTGYDLKRVVGGLLLQGRDLGMVAATDCKVMSERQPTAQELAALDFAWRVCKHVKSNAIVFTNADQTVGIGAGQMSRVDSSKIAVQKALLPIKGTVLASDAFFPFRDGVDAAAEAGVTAIIQPGGSVRDEEVIQAANEHGMAMVFTNMRHFRH</sequence>
<comment type="catalytic activity">
    <reaction evidence="1">
        <text>(6R)-10-formyltetrahydrofolate + 5-amino-1-(5-phospho-beta-D-ribosyl)imidazole-4-carboxamide = 5-formamido-1-(5-phospho-D-ribosyl)imidazole-4-carboxamide + (6S)-5,6,7,8-tetrahydrofolate</text>
        <dbReference type="Rhea" id="RHEA:22192"/>
        <dbReference type="ChEBI" id="CHEBI:57453"/>
        <dbReference type="ChEBI" id="CHEBI:58467"/>
        <dbReference type="ChEBI" id="CHEBI:58475"/>
        <dbReference type="ChEBI" id="CHEBI:195366"/>
        <dbReference type="EC" id="2.1.2.3"/>
    </reaction>
</comment>
<comment type="catalytic activity">
    <reaction evidence="1">
        <text>IMP + H2O = 5-formamido-1-(5-phospho-D-ribosyl)imidazole-4-carboxamide</text>
        <dbReference type="Rhea" id="RHEA:18445"/>
        <dbReference type="ChEBI" id="CHEBI:15377"/>
        <dbReference type="ChEBI" id="CHEBI:58053"/>
        <dbReference type="ChEBI" id="CHEBI:58467"/>
        <dbReference type="EC" id="3.5.4.10"/>
    </reaction>
</comment>
<comment type="pathway">
    <text evidence="1">Purine metabolism; IMP biosynthesis via de novo pathway; 5-formamido-1-(5-phospho-D-ribosyl)imidazole-4-carboxamide from 5-amino-1-(5-phospho-D-ribosyl)imidazole-4-carboxamide (10-formyl THF route): step 1/1.</text>
</comment>
<comment type="pathway">
    <text evidence="1">Purine metabolism; IMP biosynthesis via de novo pathway; IMP from 5-formamido-1-(5-phospho-D-ribosyl)imidazole-4-carboxamide: step 1/1.</text>
</comment>
<comment type="domain">
    <text evidence="1">The IMP cyclohydrolase activity resides in the N-terminal region.</text>
</comment>
<comment type="similarity">
    <text evidence="1">Belongs to the PurH family.</text>
</comment>
<name>PUR9_TRIL1</name>
<dbReference type="EC" id="2.1.2.3" evidence="1"/>
<dbReference type="EC" id="3.5.4.10" evidence="1"/>
<dbReference type="EMBL" id="CP001089">
    <property type="protein sequence ID" value="ACD96473.1"/>
    <property type="molecule type" value="Genomic_DNA"/>
</dbReference>
<dbReference type="RefSeq" id="WP_012470802.1">
    <property type="nucleotide sequence ID" value="NC_010814.1"/>
</dbReference>
<dbReference type="SMR" id="B3E7F6"/>
<dbReference type="STRING" id="398767.Glov_2760"/>
<dbReference type="KEGG" id="glo:Glov_2760"/>
<dbReference type="eggNOG" id="COG0138">
    <property type="taxonomic scope" value="Bacteria"/>
</dbReference>
<dbReference type="HOGENOM" id="CLU_016316_5_2_7"/>
<dbReference type="OrthoDB" id="9802065at2"/>
<dbReference type="UniPathway" id="UPA00074">
    <property type="reaction ID" value="UER00133"/>
</dbReference>
<dbReference type="UniPathway" id="UPA00074">
    <property type="reaction ID" value="UER00135"/>
</dbReference>
<dbReference type="Proteomes" id="UP000002420">
    <property type="component" value="Chromosome"/>
</dbReference>
<dbReference type="GO" id="GO:0005829">
    <property type="term" value="C:cytosol"/>
    <property type="evidence" value="ECO:0007669"/>
    <property type="project" value="TreeGrafter"/>
</dbReference>
<dbReference type="GO" id="GO:0003937">
    <property type="term" value="F:IMP cyclohydrolase activity"/>
    <property type="evidence" value="ECO:0007669"/>
    <property type="project" value="UniProtKB-UniRule"/>
</dbReference>
<dbReference type="GO" id="GO:0004643">
    <property type="term" value="F:phosphoribosylaminoimidazolecarboxamide formyltransferase activity"/>
    <property type="evidence" value="ECO:0007669"/>
    <property type="project" value="UniProtKB-UniRule"/>
</dbReference>
<dbReference type="GO" id="GO:0006189">
    <property type="term" value="P:'de novo' IMP biosynthetic process"/>
    <property type="evidence" value="ECO:0007669"/>
    <property type="project" value="UniProtKB-UniRule"/>
</dbReference>
<dbReference type="CDD" id="cd01421">
    <property type="entry name" value="IMPCH"/>
    <property type="match status" value="1"/>
</dbReference>
<dbReference type="FunFam" id="3.40.140.20:FF:000001">
    <property type="entry name" value="Bifunctional purine biosynthesis protein PurH"/>
    <property type="match status" value="1"/>
</dbReference>
<dbReference type="FunFam" id="3.40.140.20:FF:000002">
    <property type="entry name" value="Bifunctional purine biosynthesis protein PurH"/>
    <property type="match status" value="1"/>
</dbReference>
<dbReference type="FunFam" id="3.40.50.1380:FF:000001">
    <property type="entry name" value="Bifunctional purine biosynthesis protein PurH"/>
    <property type="match status" value="1"/>
</dbReference>
<dbReference type="Gene3D" id="3.40.140.20">
    <property type="match status" value="2"/>
</dbReference>
<dbReference type="Gene3D" id="3.40.50.1380">
    <property type="entry name" value="Methylglyoxal synthase-like domain"/>
    <property type="match status" value="1"/>
</dbReference>
<dbReference type="HAMAP" id="MF_00139">
    <property type="entry name" value="PurH"/>
    <property type="match status" value="1"/>
</dbReference>
<dbReference type="InterPro" id="IPR024051">
    <property type="entry name" value="AICAR_Tfase_dup_dom_sf"/>
</dbReference>
<dbReference type="InterPro" id="IPR016193">
    <property type="entry name" value="Cytidine_deaminase-like"/>
</dbReference>
<dbReference type="InterPro" id="IPR011607">
    <property type="entry name" value="MGS-like_dom"/>
</dbReference>
<dbReference type="InterPro" id="IPR036914">
    <property type="entry name" value="MGS-like_dom_sf"/>
</dbReference>
<dbReference type="InterPro" id="IPR002695">
    <property type="entry name" value="PurH-like"/>
</dbReference>
<dbReference type="NCBIfam" id="NF002049">
    <property type="entry name" value="PRK00881.1"/>
    <property type="match status" value="1"/>
</dbReference>
<dbReference type="NCBIfam" id="TIGR00355">
    <property type="entry name" value="purH"/>
    <property type="match status" value="1"/>
</dbReference>
<dbReference type="PANTHER" id="PTHR11692:SF0">
    <property type="entry name" value="BIFUNCTIONAL PURINE BIOSYNTHESIS PROTEIN ATIC"/>
    <property type="match status" value="1"/>
</dbReference>
<dbReference type="PANTHER" id="PTHR11692">
    <property type="entry name" value="BIFUNCTIONAL PURINE BIOSYNTHESIS PROTEIN PURH"/>
    <property type="match status" value="1"/>
</dbReference>
<dbReference type="Pfam" id="PF01808">
    <property type="entry name" value="AICARFT_IMPCHas"/>
    <property type="match status" value="1"/>
</dbReference>
<dbReference type="Pfam" id="PF02142">
    <property type="entry name" value="MGS"/>
    <property type="match status" value="1"/>
</dbReference>
<dbReference type="PIRSF" id="PIRSF000414">
    <property type="entry name" value="AICARFT_IMPCHas"/>
    <property type="match status" value="1"/>
</dbReference>
<dbReference type="SMART" id="SM00798">
    <property type="entry name" value="AICARFT_IMPCHas"/>
    <property type="match status" value="1"/>
</dbReference>
<dbReference type="SMART" id="SM00851">
    <property type="entry name" value="MGS"/>
    <property type="match status" value="1"/>
</dbReference>
<dbReference type="SUPFAM" id="SSF53927">
    <property type="entry name" value="Cytidine deaminase-like"/>
    <property type="match status" value="1"/>
</dbReference>
<dbReference type="SUPFAM" id="SSF52335">
    <property type="entry name" value="Methylglyoxal synthase-like"/>
    <property type="match status" value="1"/>
</dbReference>
<dbReference type="PROSITE" id="PS51855">
    <property type="entry name" value="MGS"/>
    <property type="match status" value="1"/>
</dbReference>
<proteinExistence type="inferred from homology"/>
<organism>
    <name type="scientific">Trichlorobacter lovleyi (strain ATCC BAA-1151 / DSM 17278 / SZ)</name>
    <name type="common">Geobacter lovleyi</name>
    <dbReference type="NCBI Taxonomy" id="398767"/>
    <lineage>
        <taxon>Bacteria</taxon>
        <taxon>Pseudomonadati</taxon>
        <taxon>Thermodesulfobacteriota</taxon>
        <taxon>Desulfuromonadia</taxon>
        <taxon>Geobacterales</taxon>
        <taxon>Geobacteraceae</taxon>
        <taxon>Trichlorobacter</taxon>
    </lineage>
</organism>
<evidence type="ECO:0000255" key="1">
    <source>
        <dbReference type="HAMAP-Rule" id="MF_00139"/>
    </source>
</evidence>
<evidence type="ECO:0000255" key="2">
    <source>
        <dbReference type="PROSITE-ProRule" id="PRU01202"/>
    </source>
</evidence>